<protein>
    <recommendedName>
        <fullName evidence="1">Nucleotide-binding protein AnaeK_0154</fullName>
    </recommendedName>
</protein>
<evidence type="ECO:0000255" key="1">
    <source>
        <dbReference type="HAMAP-Rule" id="MF_00636"/>
    </source>
</evidence>
<comment type="function">
    <text evidence="1">Displays ATPase and GTPase activities.</text>
</comment>
<comment type="similarity">
    <text evidence="1">Belongs to the RapZ-like family.</text>
</comment>
<sequence>MTATVSHAGPQVVILTGVSGSGKSTALRALEDAGFYCVDNLPIVFLEKLLELSGHTAGEVSRMALVVDAREGRFLVEAPRIIRELRQKGADVEVLFLDASDEALVRRYSETRRRHPLAGEGGTVPDGIAAERLALADVRGIADEVIDTTTLNVHELKRLVTRRFVAGEGAKLGVTLVSFGFRFGIPTHADLVLDVRFLPNPFFVPELKPHPGTDPRVAEFVLGQADAKAFLERLTDLLGFLLPRYRNEGKSYLTIAIGCTGGKHRSVALAAALAERLEGSGQPVRLWHRDVEKE</sequence>
<gene>
    <name type="ordered locus">AnaeK_0154</name>
</gene>
<organism>
    <name type="scientific">Anaeromyxobacter sp. (strain K)</name>
    <dbReference type="NCBI Taxonomy" id="447217"/>
    <lineage>
        <taxon>Bacteria</taxon>
        <taxon>Pseudomonadati</taxon>
        <taxon>Myxococcota</taxon>
        <taxon>Myxococcia</taxon>
        <taxon>Myxococcales</taxon>
        <taxon>Cystobacterineae</taxon>
        <taxon>Anaeromyxobacteraceae</taxon>
        <taxon>Anaeromyxobacter</taxon>
    </lineage>
</organism>
<feature type="chain" id="PRO_1000130729" description="Nucleotide-binding protein AnaeK_0154">
    <location>
        <begin position="1"/>
        <end position="294"/>
    </location>
</feature>
<feature type="binding site" evidence="1">
    <location>
        <begin position="17"/>
        <end position="24"/>
    </location>
    <ligand>
        <name>ATP</name>
        <dbReference type="ChEBI" id="CHEBI:30616"/>
    </ligand>
</feature>
<feature type="binding site" evidence="1">
    <location>
        <begin position="68"/>
        <end position="71"/>
    </location>
    <ligand>
        <name>GTP</name>
        <dbReference type="ChEBI" id="CHEBI:37565"/>
    </ligand>
</feature>
<dbReference type="EMBL" id="CP001131">
    <property type="protein sequence ID" value="ACG71397.1"/>
    <property type="molecule type" value="Genomic_DNA"/>
</dbReference>
<dbReference type="RefSeq" id="WP_012524233.1">
    <property type="nucleotide sequence ID" value="NC_011145.1"/>
</dbReference>
<dbReference type="SMR" id="B4ULF0"/>
<dbReference type="KEGG" id="ank:AnaeK_0154"/>
<dbReference type="HOGENOM" id="CLU_059558_0_0_7"/>
<dbReference type="OrthoDB" id="9784461at2"/>
<dbReference type="Proteomes" id="UP000001871">
    <property type="component" value="Chromosome"/>
</dbReference>
<dbReference type="GO" id="GO:0005524">
    <property type="term" value="F:ATP binding"/>
    <property type="evidence" value="ECO:0007669"/>
    <property type="project" value="UniProtKB-UniRule"/>
</dbReference>
<dbReference type="GO" id="GO:0016887">
    <property type="term" value="F:ATP hydrolysis activity"/>
    <property type="evidence" value="ECO:0007669"/>
    <property type="project" value="InterPro"/>
</dbReference>
<dbReference type="GO" id="GO:0005525">
    <property type="term" value="F:GTP binding"/>
    <property type="evidence" value="ECO:0007669"/>
    <property type="project" value="UniProtKB-UniRule"/>
</dbReference>
<dbReference type="Gene3D" id="3.40.50.300">
    <property type="entry name" value="P-loop containing nucleotide triphosphate hydrolases"/>
    <property type="match status" value="1"/>
</dbReference>
<dbReference type="HAMAP" id="MF_00636">
    <property type="entry name" value="RapZ_like"/>
    <property type="match status" value="1"/>
</dbReference>
<dbReference type="InterPro" id="IPR003593">
    <property type="entry name" value="AAA+_ATPase"/>
</dbReference>
<dbReference type="InterPro" id="IPR027417">
    <property type="entry name" value="P-loop_NTPase"/>
</dbReference>
<dbReference type="InterPro" id="IPR005337">
    <property type="entry name" value="RapZ-like"/>
</dbReference>
<dbReference type="InterPro" id="IPR053930">
    <property type="entry name" value="RapZ-like_N"/>
</dbReference>
<dbReference type="InterPro" id="IPR053931">
    <property type="entry name" value="RapZ_C"/>
</dbReference>
<dbReference type="NCBIfam" id="NF003828">
    <property type="entry name" value="PRK05416.1"/>
    <property type="match status" value="1"/>
</dbReference>
<dbReference type="PANTHER" id="PTHR30448">
    <property type="entry name" value="RNASE ADAPTER PROTEIN RAPZ"/>
    <property type="match status" value="1"/>
</dbReference>
<dbReference type="PANTHER" id="PTHR30448:SF0">
    <property type="entry name" value="RNASE ADAPTER PROTEIN RAPZ"/>
    <property type="match status" value="1"/>
</dbReference>
<dbReference type="Pfam" id="PF22740">
    <property type="entry name" value="PapZ_C"/>
    <property type="match status" value="1"/>
</dbReference>
<dbReference type="Pfam" id="PF03668">
    <property type="entry name" value="RapZ-like_N"/>
    <property type="match status" value="1"/>
</dbReference>
<dbReference type="PIRSF" id="PIRSF005052">
    <property type="entry name" value="P-loopkin"/>
    <property type="match status" value="1"/>
</dbReference>
<dbReference type="SMART" id="SM00382">
    <property type="entry name" value="AAA"/>
    <property type="match status" value="1"/>
</dbReference>
<dbReference type="SUPFAM" id="SSF52540">
    <property type="entry name" value="P-loop containing nucleoside triphosphate hydrolases"/>
    <property type="match status" value="1"/>
</dbReference>
<keyword id="KW-0067">ATP-binding</keyword>
<keyword id="KW-0342">GTP-binding</keyword>
<keyword id="KW-0547">Nucleotide-binding</keyword>
<name>Y154_ANASK</name>
<reference key="1">
    <citation type="submission" date="2008-08" db="EMBL/GenBank/DDBJ databases">
        <title>Complete sequence of Anaeromyxobacter sp. K.</title>
        <authorList>
            <consortium name="US DOE Joint Genome Institute"/>
            <person name="Lucas S."/>
            <person name="Copeland A."/>
            <person name="Lapidus A."/>
            <person name="Glavina del Rio T."/>
            <person name="Dalin E."/>
            <person name="Tice H."/>
            <person name="Bruce D."/>
            <person name="Goodwin L."/>
            <person name="Pitluck S."/>
            <person name="Saunders E."/>
            <person name="Brettin T."/>
            <person name="Detter J.C."/>
            <person name="Han C."/>
            <person name="Larimer F."/>
            <person name="Land M."/>
            <person name="Hauser L."/>
            <person name="Kyrpides N."/>
            <person name="Ovchinnikiva G."/>
            <person name="Beliaev A."/>
        </authorList>
    </citation>
    <scope>NUCLEOTIDE SEQUENCE [LARGE SCALE GENOMIC DNA]</scope>
    <source>
        <strain>K</strain>
    </source>
</reference>
<accession>B4ULF0</accession>
<proteinExistence type="inferred from homology"/>